<dbReference type="EC" id="1.2.1.70" evidence="1"/>
<dbReference type="EMBL" id="CT971583">
    <property type="protein sequence ID" value="CAK23725.1"/>
    <property type="molecule type" value="Genomic_DNA"/>
</dbReference>
<dbReference type="SMR" id="A5GLB0"/>
<dbReference type="STRING" id="32051.SynWH7803_1299"/>
<dbReference type="KEGG" id="syx:SynWH7803_1299"/>
<dbReference type="eggNOG" id="COG0373">
    <property type="taxonomic scope" value="Bacteria"/>
</dbReference>
<dbReference type="HOGENOM" id="CLU_035113_2_1_3"/>
<dbReference type="OrthoDB" id="110209at2"/>
<dbReference type="UniPathway" id="UPA00251">
    <property type="reaction ID" value="UER00316"/>
</dbReference>
<dbReference type="UniPathway" id="UPA00668"/>
<dbReference type="Proteomes" id="UP000001566">
    <property type="component" value="Chromosome"/>
</dbReference>
<dbReference type="GO" id="GO:0008883">
    <property type="term" value="F:glutamyl-tRNA reductase activity"/>
    <property type="evidence" value="ECO:0007669"/>
    <property type="project" value="UniProtKB-UniRule"/>
</dbReference>
<dbReference type="GO" id="GO:0050661">
    <property type="term" value="F:NADP binding"/>
    <property type="evidence" value="ECO:0007669"/>
    <property type="project" value="InterPro"/>
</dbReference>
<dbReference type="GO" id="GO:0015995">
    <property type="term" value="P:chlorophyll biosynthetic process"/>
    <property type="evidence" value="ECO:0007669"/>
    <property type="project" value="UniProtKB-UniRule"/>
</dbReference>
<dbReference type="GO" id="GO:0006782">
    <property type="term" value="P:protoporphyrinogen IX biosynthetic process"/>
    <property type="evidence" value="ECO:0007669"/>
    <property type="project" value="UniProtKB-UniRule"/>
</dbReference>
<dbReference type="CDD" id="cd05213">
    <property type="entry name" value="NAD_bind_Glutamyl_tRNA_reduct"/>
    <property type="match status" value="1"/>
</dbReference>
<dbReference type="FunFam" id="3.30.460.30:FF:000001">
    <property type="entry name" value="Glutamyl-tRNA reductase"/>
    <property type="match status" value="1"/>
</dbReference>
<dbReference type="FunFam" id="3.40.50.720:FF:000031">
    <property type="entry name" value="Glutamyl-tRNA reductase"/>
    <property type="match status" value="1"/>
</dbReference>
<dbReference type="Gene3D" id="3.30.460.30">
    <property type="entry name" value="Glutamyl-tRNA reductase, N-terminal domain"/>
    <property type="match status" value="1"/>
</dbReference>
<dbReference type="Gene3D" id="3.40.50.720">
    <property type="entry name" value="NAD(P)-binding Rossmann-like Domain"/>
    <property type="match status" value="1"/>
</dbReference>
<dbReference type="HAMAP" id="MF_00087">
    <property type="entry name" value="Glu_tRNA_reductase"/>
    <property type="match status" value="1"/>
</dbReference>
<dbReference type="InterPro" id="IPR000343">
    <property type="entry name" value="4pyrrol_synth_GluRdtase"/>
</dbReference>
<dbReference type="InterPro" id="IPR015896">
    <property type="entry name" value="4pyrrol_synth_GluRdtase_dimer"/>
</dbReference>
<dbReference type="InterPro" id="IPR015895">
    <property type="entry name" value="4pyrrol_synth_GluRdtase_N"/>
</dbReference>
<dbReference type="InterPro" id="IPR018214">
    <property type="entry name" value="GluRdtase_CS"/>
</dbReference>
<dbReference type="InterPro" id="IPR036453">
    <property type="entry name" value="GluRdtase_dimer_dom_sf"/>
</dbReference>
<dbReference type="InterPro" id="IPR036343">
    <property type="entry name" value="GluRdtase_N_sf"/>
</dbReference>
<dbReference type="InterPro" id="IPR036291">
    <property type="entry name" value="NAD(P)-bd_dom_sf"/>
</dbReference>
<dbReference type="InterPro" id="IPR006151">
    <property type="entry name" value="Shikm_DH/Glu-tRNA_Rdtase"/>
</dbReference>
<dbReference type="NCBIfam" id="TIGR01035">
    <property type="entry name" value="hemA"/>
    <property type="match status" value="1"/>
</dbReference>
<dbReference type="NCBIfam" id="NF000744">
    <property type="entry name" value="PRK00045.1-3"/>
    <property type="match status" value="1"/>
</dbReference>
<dbReference type="PANTHER" id="PTHR43120">
    <property type="entry name" value="GLUTAMYL-TRNA REDUCTASE 1, CHLOROPLASTIC"/>
    <property type="match status" value="1"/>
</dbReference>
<dbReference type="PANTHER" id="PTHR43120:SF1">
    <property type="entry name" value="GLUTAMYL-TRNA REDUCTASE 1, CHLOROPLASTIC"/>
    <property type="match status" value="1"/>
</dbReference>
<dbReference type="Pfam" id="PF00745">
    <property type="entry name" value="GlutR_dimer"/>
    <property type="match status" value="1"/>
</dbReference>
<dbReference type="Pfam" id="PF05201">
    <property type="entry name" value="GlutR_N"/>
    <property type="match status" value="1"/>
</dbReference>
<dbReference type="Pfam" id="PF01488">
    <property type="entry name" value="Shikimate_DH"/>
    <property type="match status" value="1"/>
</dbReference>
<dbReference type="PIRSF" id="PIRSF000445">
    <property type="entry name" value="4pyrrol_synth_GluRdtase"/>
    <property type="match status" value="1"/>
</dbReference>
<dbReference type="SUPFAM" id="SSF69742">
    <property type="entry name" value="Glutamyl tRNA-reductase catalytic, N-terminal domain"/>
    <property type="match status" value="1"/>
</dbReference>
<dbReference type="SUPFAM" id="SSF69075">
    <property type="entry name" value="Glutamyl tRNA-reductase dimerization domain"/>
    <property type="match status" value="1"/>
</dbReference>
<dbReference type="SUPFAM" id="SSF51735">
    <property type="entry name" value="NAD(P)-binding Rossmann-fold domains"/>
    <property type="match status" value="1"/>
</dbReference>
<dbReference type="PROSITE" id="PS00747">
    <property type="entry name" value="GLUTR"/>
    <property type="match status" value="1"/>
</dbReference>
<organism>
    <name type="scientific">Synechococcus sp. (strain WH7803)</name>
    <dbReference type="NCBI Taxonomy" id="32051"/>
    <lineage>
        <taxon>Bacteria</taxon>
        <taxon>Bacillati</taxon>
        <taxon>Cyanobacteriota</taxon>
        <taxon>Cyanophyceae</taxon>
        <taxon>Synechococcales</taxon>
        <taxon>Synechococcaceae</taxon>
        <taxon>Synechococcus</taxon>
    </lineage>
</organism>
<evidence type="ECO:0000255" key="1">
    <source>
        <dbReference type="HAMAP-Rule" id="MF_00087"/>
    </source>
</evidence>
<name>HEM1_SYNPW</name>
<sequence>MHIAVVGLSHRTAPVEVREKLSIPEQTMEESLQNLRGHDQVLEASILSTCNRLEIYTLVRNPELGISAVREFLSSHSGLETGDLKPHLFAYHHEDAVGHLLRVAAGLDSLVLGEGQILSQVKKMMRLGQEHKSLGPILNRLLTQAVSTGKRVRSETNLGTGAVSISSAAVELAQLKLGQSRGLDELVTLEDEQVAVVGAGRMSRLLLQHLQAKGASGVVVLNRTVARAEALAADFPTLPVQCRPLKDLDHCLSTCSLIFTSTAADDPIIDAERLSKLNRRSSLRLIDIGVPRNIAADVEGIGGVDAHDVDDLKEVVERNQEARQQVAREAQGLLDGEARQFLEWWDSLEAVPTINRLRSSMESIRSEELMKALSRMGPDFSARERKVVEALSKGIINKILHTPVTALRSPQPRSDRQNALSVVERLFDLQADEDSVQN</sequence>
<protein>
    <recommendedName>
        <fullName evidence="1">Glutamyl-tRNA reductase</fullName>
        <shortName evidence="1">GluTR</shortName>
        <ecNumber evidence="1">1.2.1.70</ecNumber>
    </recommendedName>
</protein>
<proteinExistence type="inferred from homology"/>
<gene>
    <name evidence="1" type="primary">hemA</name>
    <name type="ordered locus">SynWH7803_1299</name>
</gene>
<keyword id="KW-0149">Chlorophyll biosynthesis</keyword>
<keyword id="KW-0521">NADP</keyword>
<keyword id="KW-0560">Oxidoreductase</keyword>
<keyword id="KW-0627">Porphyrin biosynthesis</keyword>
<keyword id="KW-1185">Reference proteome</keyword>
<reference key="1">
    <citation type="submission" date="2006-05" db="EMBL/GenBank/DDBJ databases">
        <authorList>
            <consortium name="Genoscope"/>
        </authorList>
    </citation>
    <scope>NUCLEOTIDE SEQUENCE [LARGE SCALE GENOMIC DNA]</scope>
    <source>
        <strain>WH7803</strain>
    </source>
</reference>
<comment type="function">
    <text evidence="1">Catalyzes the NADPH-dependent reduction of glutamyl-tRNA(Glu) to glutamate 1-semialdehyde (GSA).</text>
</comment>
<comment type="catalytic activity">
    <reaction evidence="1">
        <text>(S)-4-amino-5-oxopentanoate + tRNA(Glu) + NADP(+) = L-glutamyl-tRNA(Glu) + NADPH + H(+)</text>
        <dbReference type="Rhea" id="RHEA:12344"/>
        <dbReference type="Rhea" id="RHEA-COMP:9663"/>
        <dbReference type="Rhea" id="RHEA-COMP:9680"/>
        <dbReference type="ChEBI" id="CHEBI:15378"/>
        <dbReference type="ChEBI" id="CHEBI:57501"/>
        <dbReference type="ChEBI" id="CHEBI:57783"/>
        <dbReference type="ChEBI" id="CHEBI:58349"/>
        <dbReference type="ChEBI" id="CHEBI:78442"/>
        <dbReference type="ChEBI" id="CHEBI:78520"/>
        <dbReference type="EC" id="1.2.1.70"/>
    </reaction>
</comment>
<comment type="pathway">
    <text evidence="1">Porphyrin-containing compound metabolism; protoporphyrin-IX biosynthesis; 5-aminolevulinate from L-glutamyl-tRNA(Glu): step 1/2.</text>
</comment>
<comment type="pathway">
    <text evidence="1">Porphyrin-containing compound metabolism; chlorophyll biosynthesis.</text>
</comment>
<comment type="subunit">
    <text evidence="1">Homodimer.</text>
</comment>
<comment type="domain">
    <text evidence="1">Possesses an unusual extended V-shaped dimeric structure with each monomer consisting of three distinct domains arranged along a curved 'spinal' alpha-helix. The N-terminal catalytic domain specifically recognizes the glutamate moiety of the substrate. The second domain is the NADPH-binding domain, and the third C-terminal domain is responsible for dimerization.</text>
</comment>
<comment type="miscellaneous">
    <text evidence="1">During catalysis, the active site Cys acts as a nucleophile attacking the alpha-carbonyl group of tRNA-bound glutamate with the formation of a thioester intermediate between enzyme and glutamate, and the concomitant release of tRNA(Glu). The thioester intermediate is finally reduced by direct hydride transfer from NADPH, to form the product GSA.</text>
</comment>
<comment type="similarity">
    <text evidence="1">Belongs to the glutamyl-tRNA reductase family.</text>
</comment>
<feature type="chain" id="PRO_1000004711" description="Glutamyl-tRNA reductase">
    <location>
        <begin position="1"/>
        <end position="438"/>
    </location>
</feature>
<feature type="active site" description="Nucleophile" evidence="1">
    <location>
        <position position="50"/>
    </location>
</feature>
<feature type="binding site" evidence="1">
    <location>
        <begin position="49"/>
        <end position="52"/>
    </location>
    <ligand>
        <name>substrate</name>
    </ligand>
</feature>
<feature type="binding site" evidence="1">
    <location>
        <position position="109"/>
    </location>
    <ligand>
        <name>substrate</name>
    </ligand>
</feature>
<feature type="binding site" evidence="1">
    <location>
        <begin position="114"/>
        <end position="116"/>
    </location>
    <ligand>
        <name>substrate</name>
    </ligand>
</feature>
<feature type="binding site" evidence="1">
    <location>
        <position position="120"/>
    </location>
    <ligand>
        <name>substrate</name>
    </ligand>
</feature>
<feature type="binding site" evidence="1">
    <location>
        <begin position="198"/>
        <end position="203"/>
    </location>
    <ligand>
        <name>NADP(+)</name>
        <dbReference type="ChEBI" id="CHEBI:58349"/>
    </ligand>
</feature>
<feature type="site" description="Important for activity" evidence="1">
    <location>
        <position position="99"/>
    </location>
</feature>
<accession>A5GLB0</accession>